<name>Y1060_BURL3</name>
<sequence length="195" mass="21036">MTTLSDSALDQLFLSARTHNAWQDKPVDDALLHRLIDLTKFGPTSANASPARFVFVKSPEAKARLKPALSEGNLAKTMAAPVTVIVGMDMAFHEHLPRLFPHADARSWFAGNDALIETTAFRNSSLQGAYLILAARALGLDAGPMSGFDGAKVDAAFFAGTAIRSNFLVNLGYGDPAGLFPRSPRFDFDDIARIE</sequence>
<gene>
    <name type="ordered locus">Bcep18194_B1060</name>
</gene>
<keyword id="KW-0285">Flavoprotein</keyword>
<keyword id="KW-0288">FMN</keyword>
<keyword id="KW-0520">NAD</keyword>
<keyword id="KW-0521">NADP</keyword>
<keyword id="KW-0560">Oxidoreductase</keyword>
<proteinExistence type="inferred from homology"/>
<protein>
    <recommendedName>
        <fullName evidence="1">Putative NADH dehydrogenase/NAD(P)H nitroreductase Bcep18194_B1060</fullName>
        <ecNumber evidence="1">1.-.-.-</ecNumber>
    </recommendedName>
</protein>
<feature type="chain" id="PRO_1000138688" description="Putative NADH dehydrogenase/NAD(P)H nitroreductase Bcep18194_B1060">
    <location>
        <begin position="1"/>
        <end position="195"/>
    </location>
</feature>
<dbReference type="EC" id="1.-.-.-" evidence="1"/>
<dbReference type="EMBL" id="CP000152">
    <property type="protein sequence ID" value="ABB11174.1"/>
    <property type="molecule type" value="Genomic_DNA"/>
</dbReference>
<dbReference type="RefSeq" id="WP_011354667.1">
    <property type="nucleotide sequence ID" value="NC_007511.1"/>
</dbReference>
<dbReference type="SMR" id="Q398D7"/>
<dbReference type="GeneID" id="45097414"/>
<dbReference type="KEGG" id="bur:Bcep18194_B1060"/>
<dbReference type="PATRIC" id="fig|482957.22.peg.4720"/>
<dbReference type="HOGENOM" id="CLU_084441_0_0_4"/>
<dbReference type="Proteomes" id="UP000002705">
    <property type="component" value="Chromosome 2"/>
</dbReference>
<dbReference type="GO" id="GO:0016491">
    <property type="term" value="F:oxidoreductase activity"/>
    <property type="evidence" value="ECO:0007669"/>
    <property type="project" value="UniProtKB-UniRule"/>
</dbReference>
<dbReference type="CDD" id="cd02148">
    <property type="entry name" value="RutE-like"/>
    <property type="match status" value="1"/>
</dbReference>
<dbReference type="Gene3D" id="3.40.109.10">
    <property type="entry name" value="NADH Oxidase"/>
    <property type="match status" value="1"/>
</dbReference>
<dbReference type="HAMAP" id="MF_01204">
    <property type="entry name" value="Oxidoreductase_RutE_HadB"/>
    <property type="match status" value="1"/>
</dbReference>
<dbReference type="InterPro" id="IPR029479">
    <property type="entry name" value="Nitroreductase"/>
</dbReference>
<dbReference type="InterPro" id="IPR000415">
    <property type="entry name" value="Nitroreductase-like"/>
</dbReference>
<dbReference type="InterPro" id="IPR050461">
    <property type="entry name" value="Nitroreductase_HadB/RutE"/>
</dbReference>
<dbReference type="InterPro" id="IPR023936">
    <property type="entry name" value="RutE-like"/>
</dbReference>
<dbReference type="NCBIfam" id="NF003768">
    <property type="entry name" value="PRK05365.1"/>
    <property type="match status" value="1"/>
</dbReference>
<dbReference type="PANTHER" id="PTHR43543">
    <property type="entry name" value="MALONIC SEMIALDEHYDE REDUCTASE RUTE-RELATED"/>
    <property type="match status" value="1"/>
</dbReference>
<dbReference type="PANTHER" id="PTHR43543:SF1">
    <property type="entry name" value="MALONIC SEMIALDEHYDE REDUCTASE RUTE-RELATED"/>
    <property type="match status" value="1"/>
</dbReference>
<dbReference type="Pfam" id="PF00881">
    <property type="entry name" value="Nitroreductase"/>
    <property type="match status" value="1"/>
</dbReference>
<dbReference type="SUPFAM" id="SSF55469">
    <property type="entry name" value="FMN-dependent nitroreductase-like"/>
    <property type="match status" value="1"/>
</dbReference>
<accession>Q398D7</accession>
<comment type="cofactor">
    <cofactor evidence="1">
        <name>FMN</name>
        <dbReference type="ChEBI" id="CHEBI:58210"/>
    </cofactor>
</comment>
<comment type="similarity">
    <text evidence="1">Belongs to the nitroreductase family. HadB/RutE subfamily.</text>
</comment>
<evidence type="ECO:0000255" key="1">
    <source>
        <dbReference type="HAMAP-Rule" id="MF_01204"/>
    </source>
</evidence>
<reference key="1">
    <citation type="submission" date="2005-10" db="EMBL/GenBank/DDBJ databases">
        <title>Complete sequence of chromosome 2 of Burkholderia sp. 383.</title>
        <authorList>
            <consortium name="US DOE Joint Genome Institute"/>
            <person name="Copeland A."/>
            <person name="Lucas S."/>
            <person name="Lapidus A."/>
            <person name="Barry K."/>
            <person name="Detter J.C."/>
            <person name="Glavina T."/>
            <person name="Hammon N."/>
            <person name="Israni S."/>
            <person name="Pitluck S."/>
            <person name="Chain P."/>
            <person name="Malfatti S."/>
            <person name="Shin M."/>
            <person name="Vergez L."/>
            <person name="Schmutz J."/>
            <person name="Larimer F."/>
            <person name="Land M."/>
            <person name="Kyrpides N."/>
            <person name="Lykidis A."/>
            <person name="Richardson P."/>
        </authorList>
    </citation>
    <scope>NUCLEOTIDE SEQUENCE [LARGE SCALE GENOMIC DNA]</scope>
    <source>
        <strain>ATCC 17760 / DSM 23089 / LMG 22485 / NCIMB 9086 / R18194 / 383</strain>
    </source>
</reference>
<organism>
    <name type="scientific">Burkholderia lata (strain ATCC 17760 / DSM 23089 / LMG 22485 / NCIMB 9086 / R18194 / 383)</name>
    <dbReference type="NCBI Taxonomy" id="482957"/>
    <lineage>
        <taxon>Bacteria</taxon>
        <taxon>Pseudomonadati</taxon>
        <taxon>Pseudomonadota</taxon>
        <taxon>Betaproteobacteria</taxon>
        <taxon>Burkholderiales</taxon>
        <taxon>Burkholderiaceae</taxon>
        <taxon>Burkholderia</taxon>
        <taxon>Burkholderia cepacia complex</taxon>
    </lineage>
</organism>